<name>APAH_BURTA</name>
<dbReference type="EC" id="3.6.1.41" evidence="1"/>
<dbReference type="EMBL" id="CP000086">
    <property type="protein sequence ID" value="ABC36488.1"/>
    <property type="molecule type" value="Genomic_DNA"/>
</dbReference>
<dbReference type="RefSeq" id="WP_009889582.1">
    <property type="nucleotide sequence ID" value="NZ_CP008785.1"/>
</dbReference>
<dbReference type="SMR" id="Q2SYI5"/>
<dbReference type="GeneID" id="45121209"/>
<dbReference type="KEGG" id="bte:BTH_I1468"/>
<dbReference type="HOGENOM" id="CLU_056184_1_0_4"/>
<dbReference type="Proteomes" id="UP000001930">
    <property type="component" value="Chromosome I"/>
</dbReference>
<dbReference type="GO" id="GO:0008803">
    <property type="term" value="F:bis(5'-nucleosyl)-tetraphosphatase (symmetrical) activity"/>
    <property type="evidence" value="ECO:0007669"/>
    <property type="project" value="UniProtKB-UniRule"/>
</dbReference>
<dbReference type="CDD" id="cd07422">
    <property type="entry name" value="MPP_ApaH"/>
    <property type="match status" value="1"/>
</dbReference>
<dbReference type="Gene3D" id="3.60.21.10">
    <property type="match status" value="1"/>
</dbReference>
<dbReference type="HAMAP" id="MF_00199">
    <property type="entry name" value="ApaH"/>
    <property type="match status" value="1"/>
</dbReference>
<dbReference type="InterPro" id="IPR004617">
    <property type="entry name" value="ApaH"/>
</dbReference>
<dbReference type="InterPro" id="IPR004843">
    <property type="entry name" value="Calcineurin-like_PHP_ApaH"/>
</dbReference>
<dbReference type="InterPro" id="IPR029052">
    <property type="entry name" value="Metallo-depent_PP-like"/>
</dbReference>
<dbReference type="NCBIfam" id="TIGR00668">
    <property type="entry name" value="apaH"/>
    <property type="match status" value="1"/>
</dbReference>
<dbReference type="NCBIfam" id="NF001204">
    <property type="entry name" value="PRK00166.1"/>
    <property type="match status" value="1"/>
</dbReference>
<dbReference type="PANTHER" id="PTHR40942">
    <property type="match status" value="1"/>
</dbReference>
<dbReference type="PANTHER" id="PTHR40942:SF4">
    <property type="entry name" value="CYTOCHROME C5"/>
    <property type="match status" value="1"/>
</dbReference>
<dbReference type="Pfam" id="PF00149">
    <property type="entry name" value="Metallophos"/>
    <property type="match status" value="1"/>
</dbReference>
<dbReference type="PIRSF" id="PIRSF000903">
    <property type="entry name" value="B5n-ttraPtase_sm"/>
    <property type="match status" value="1"/>
</dbReference>
<dbReference type="SUPFAM" id="SSF56300">
    <property type="entry name" value="Metallo-dependent phosphatases"/>
    <property type="match status" value="1"/>
</dbReference>
<accession>Q2SYI5</accession>
<feature type="chain" id="PRO_1000012052" description="Bis(5'-nucleosyl)-tetraphosphatase, symmetrical">
    <location>
        <begin position="1"/>
        <end position="282"/>
    </location>
</feature>
<protein>
    <recommendedName>
        <fullName evidence="1">Bis(5'-nucleosyl)-tetraphosphatase, symmetrical</fullName>
        <ecNumber evidence="1">3.6.1.41</ecNumber>
    </recommendedName>
    <alternativeName>
        <fullName evidence="1">Ap4A hydrolase</fullName>
    </alternativeName>
    <alternativeName>
        <fullName evidence="1">Diadenosine 5',5'''-P1,P4-tetraphosphate pyrophosphohydrolase</fullName>
    </alternativeName>
    <alternativeName>
        <fullName evidence="1">Diadenosine tetraphosphatase</fullName>
    </alternativeName>
</protein>
<reference key="1">
    <citation type="journal article" date="2005" name="BMC Genomics">
        <title>Bacterial genome adaptation to niches: divergence of the potential virulence genes in three Burkholderia species of different survival strategies.</title>
        <authorList>
            <person name="Kim H.S."/>
            <person name="Schell M.A."/>
            <person name="Yu Y."/>
            <person name="Ulrich R.L."/>
            <person name="Sarria S.H."/>
            <person name="Nierman W.C."/>
            <person name="DeShazer D."/>
        </authorList>
    </citation>
    <scope>NUCLEOTIDE SEQUENCE [LARGE SCALE GENOMIC DNA]</scope>
    <source>
        <strain>ATCC 700388 / DSM 13276 / CCUG 48851 / CIP 106301 / E264</strain>
    </source>
</reference>
<sequence length="282" mass="30602">MTNFSSSPPIAFGDLQGCHAAYRQLFAQLSPAADTPLWFAGDLVNRGPASLATLREIVGLGERAVAVLGNHDLHLLAVAAGIRTLKPGDTIGEILDAPDADDLIEWVRHRPFAHFERGMLMVHAGLLPQWDAALALELADELQRALRAPNWRDTLRGLYGNDPNCWSPDLKKADRLRVAFNAFTRIRFCTPEGAMEFRANGGPASAPAGYLPWFDAPSRKTADVTVVFGHWAALGLMLRENLVALDSGCVWGNRLSAVRLADDPAAREVAQVACERCGAAEE</sequence>
<organism>
    <name type="scientific">Burkholderia thailandensis (strain ATCC 700388 / DSM 13276 / CCUG 48851 / CIP 106301 / E264)</name>
    <dbReference type="NCBI Taxonomy" id="271848"/>
    <lineage>
        <taxon>Bacteria</taxon>
        <taxon>Pseudomonadati</taxon>
        <taxon>Pseudomonadota</taxon>
        <taxon>Betaproteobacteria</taxon>
        <taxon>Burkholderiales</taxon>
        <taxon>Burkholderiaceae</taxon>
        <taxon>Burkholderia</taxon>
        <taxon>pseudomallei group</taxon>
    </lineage>
</organism>
<gene>
    <name evidence="1" type="primary">apaH</name>
    <name type="ordered locus">BTH_I1468</name>
</gene>
<evidence type="ECO:0000255" key="1">
    <source>
        <dbReference type="HAMAP-Rule" id="MF_00199"/>
    </source>
</evidence>
<comment type="function">
    <text evidence="1">Hydrolyzes diadenosine 5',5'''-P1,P4-tetraphosphate to yield ADP.</text>
</comment>
<comment type="catalytic activity">
    <reaction evidence="1">
        <text>P(1),P(4)-bis(5'-adenosyl) tetraphosphate + H2O = 2 ADP + 2 H(+)</text>
        <dbReference type="Rhea" id="RHEA:24252"/>
        <dbReference type="ChEBI" id="CHEBI:15377"/>
        <dbReference type="ChEBI" id="CHEBI:15378"/>
        <dbReference type="ChEBI" id="CHEBI:58141"/>
        <dbReference type="ChEBI" id="CHEBI:456216"/>
        <dbReference type="EC" id="3.6.1.41"/>
    </reaction>
</comment>
<comment type="similarity">
    <text evidence="1">Belongs to the Ap4A hydrolase family.</text>
</comment>
<keyword id="KW-0378">Hydrolase</keyword>
<proteinExistence type="inferred from homology"/>